<dbReference type="EC" id="1.17.7.4" evidence="1"/>
<dbReference type="EMBL" id="AE005674">
    <property type="protein sequence ID" value="AAN41692.2"/>
    <property type="molecule type" value="Genomic_DNA"/>
</dbReference>
<dbReference type="EMBL" id="AE014073">
    <property type="protein sequence ID" value="AAP15573.1"/>
    <property type="molecule type" value="Genomic_DNA"/>
</dbReference>
<dbReference type="RefSeq" id="NP_705985.2">
    <property type="nucleotide sequence ID" value="NC_004337.2"/>
</dbReference>
<dbReference type="RefSeq" id="WP_001166389.1">
    <property type="nucleotide sequence ID" value="NZ_WPGW01000005.1"/>
</dbReference>
<dbReference type="SMR" id="Q7UDT8"/>
<dbReference type="STRING" id="198214.SF0026"/>
<dbReference type="PaxDb" id="198214-SF0026"/>
<dbReference type="GeneID" id="1024589"/>
<dbReference type="KEGG" id="sfl:SF0026"/>
<dbReference type="KEGG" id="sfx:S0028"/>
<dbReference type="PATRIC" id="fig|198214.7.peg.29"/>
<dbReference type="HOGENOM" id="CLU_027486_1_0_6"/>
<dbReference type="UniPathway" id="UPA00056">
    <property type="reaction ID" value="UER00097"/>
</dbReference>
<dbReference type="UniPathway" id="UPA00059">
    <property type="reaction ID" value="UER00105"/>
</dbReference>
<dbReference type="Proteomes" id="UP000001006">
    <property type="component" value="Chromosome"/>
</dbReference>
<dbReference type="Proteomes" id="UP000002673">
    <property type="component" value="Chromosome"/>
</dbReference>
<dbReference type="GO" id="GO:0051539">
    <property type="term" value="F:4 iron, 4 sulfur cluster binding"/>
    <property type="evidence" value="ECO:0007669"/>
    <property type="project" value="UniProtKB-UniRule"/>
</dbReference>
<dbReference type="GO" id="GO:0051745">
    <property type="term" value="F:4-hydroxy-3-methylbut-2-enyl diphosphate reductase activity"/>
    <property type="evidence" value="ECO:0007669"/>
    <property type="project" value="UniProtKB-UniRule"/>
</dbReference>
<dbReference type="GO" id="GO:0046872">
    <property type="term" value="F:metal ion binding"/>
    <property type="evidence" value="ECO:0007669"/>
    <property type="project" value="UniProtKB-KW"/>
</dbReference>
<dbReference type="GO" id="GO:0050992">
    <property type="term" value="P:dimethylallyl diphosphate biosynthetic process"/>
    <property type="evidence" value="ECO:0007669"/>
    <property type="project" value="UniProtKB-UniRule"/>
</dbReference>
<dbReference type="GO" id="GO:0019288">
    <property type="term" value="P:isopentenyl diphosphate biosynthetic process, methylerythritol 4-phosphate pathway"/>
    <property type="evidence" value="ECO:0007669"/>
    <property type="project" value="UniProtKB-UniRule"/>
</dbReference>
<dbReference type="GO" id="GO:0016114">
    <property type="term" value="P:terpenoid biosynthetic process"/>
    <property type="evidence" value="ECO:0007669"/>
    <property type="project" value="UniProtKB-UniRule"/>
</dbReference>
<dbReference type="CDD" id="cd13944">
    <property type="entry name" value="lytB_ispH"/>
    <property type="match status" value="1"/>
</dbReference>
<dbReference type="FunFam" id="3.40.1010.20:FF:000001">
    <property type="entry name" value="4-hydroxy-3-methylbut-2-enyl diphosphate reductase"/>
    <property type="match status" value="1"/>
</dbReference>
<dbReference type="FunFam" id="3.40.50.11270:FF:000001">
    <property type="entry name" value="4-hydroxy-3-methylbut-2-enyl diphosphate reductase"/>
    <property type="match status" value="1"/>
</dbReference>
<dbReference type="Gene3D" id="3.40.50.11270">
    <property type="match status" value="1"/>
</dbReference>
<dbReference type="Gene3D" id="3.40.1010.20">
    <property type="entry name" value="4-hydroxy-3-methylbut-2-enyl diphosphate reductase, catalytic domain"/>
    <property type="match status" value="2"/>
</dbReference>
<dbReference type="HAMAP" id="MF_00191">
    <property type="entry name" value="IspH"/>
    <property type="match status" value="1"/>
</dbReference>
<dbReference type="InterPro" id="IPR003451">
    <property type="entry name" value="LytB/IspH"/>
</dbReference>
<dbReference type="NCBIfam" id="TIGR00216">
    <property type="entry name" value="ispH_lytB"/>
    <property type="match status" value="1"/>
</dbReference>
<dbReference type="NCBIfam" id="NF002188">
    <property type="entry name" value="PRK01045.1-2"/>
    <property type="match status" value="1"/>
</dbReference>
<dbReference type="NCBIfam" id="NF002190">
    <property type="entry name" value="PRK01045.1-4"/>
    <property type="match status" value="1"/>
</dbReference>
<dbReference type="PANTHER" id="PTHR30426">
    <property type="entry name" value="4-HYDROXY-3-METHYLBUT-2-ENYL DIPHOSPHATE REDUCTASE"/>
    <property type="match status" value="1"/>
</dbReference>
<dbReference type="PANTHER" id="PTHR30426:SF0">
    <property type="entry name" value="4-HYDROXY-3-METHYLBUT-2-ENYL DIPHOSPHATE REDUCTASE"/>
    <property type="match status" value="1"/>
</dbReference>
<dbReference type="Pfam" id="PF02401">
    <property type="entry name" value="LYTB"/>
    <property type="match status" value="1"/>
</dbReference>
<organism>
    <name type="scientific">Shigella flexneri</name>
    <dbReference type="NCBI Taxonomy" id="623"/>
    <lineage>
        <taxon>Bacteria</taxon>
        <taxon>Pseudomonadati</taxon>
        <taxon>Pseudomonadota</taxon>
        <taxon>Gammaproteobacteria</taxon>
        <taxon>Enterobacterales</taxon>
        <taxon>Enterobacteriaceae</taxon>
        <taxon>Shigella</taxon>
    </lineage>
</organism>
<sequence>MQILLANPRGFCAGVDRAISIVENALAIYGAPIYVRHEVVHNRYVVDSLRERGAIFIEQISEVPDGAILIFSAHGVSQAVRNEAKSRDLTVFDATCPLVTKVHMEVARASRRGEESILIGHAGHPEVEGTMGQYSNPEGGMYLVESPDDVWKLTVKNEEKLSFMTQTTLSVDDTSDVIDALRKRFPKIVGPRKDDICYATTNRQEAVRALAEQAEVVLVVGSKNSSNSNRLAELAQRMGKHAFLIDDAKDIQEEWVKEVKCVGVTAGASAPDILVQNVVARLQQLGGGEAIPLEGREENIVFEVPKELRVDIREVD</sequence>
<keyword id="KW-0004">4Fe-4S</keyword>
<keyword id="KW-0408">Iron</keyword>
<keyword id="KW-0411">Iron-sulfur</keyword>
<keyword id="KW-0414">Isoprene biosynthesis</keyword>
<keyword id="KW-0479">Metal-binding</keyword>
<keyword id="KW-0560">Oxidoreductase</keyword>
<keyword id="KW-1185">Reference proteome</keyword>
<comment type="function">
    <text evidence="1">Catalyzes the conversion of 1-hydroxy-2-methyl-2-(E)-butenyl 4-diphosphate (HMBPP) into a mixture of isopentenyl diphosphate (IPP) and dimethylallyl diphosphate (DMAPP). Acts in the terminal step of the DOXP/MEP pathway for isoprenoid precursor biosynthesis.</text>
</comment>
<comment type="catalytic activity">
    <reaction evidence="1">
        <text>isopentenyl diphosphate + 2 oxidized [2Fe-2S]-[ferredoxin] + H2O = (2E)-4-hydroxy-3-methylbut-2-enyl diphosphate + 2 reduced [2Fe-2S]-[ferredoxin] + 2 H(+)</text>
        <dbReference type="Rhea" id="RHEA:24488"/>
        <dbReference type="Rhea" id="RHEA-COMP:10000"/>
        <dbReference type="Rhea" id="RHEA-COMP:10001"/>
        <dbReference type="ChEBI" id="CHEBI:15377"/>
        <dbReference type="ChEBI" id="CHEBI:15378"/>
        <dbReference type="ChEBI" id="CHEBI:33737"/>
        <dbReference type="ChEBI" id="CHEBI:33738"/>
        <dbReference type="ChEBI" id="CHEBI:128753"/>
        <dbReference type="ChEBI" id="CHEBI:128769"/>
        <dbReference type="EC" id="1.17.7.4"/>
    </reaction>
</comment>
<comment type="catalytic activity">
    <reaction evidence="1">
        <text>dimethylallyl diphosphate + 2 oxidized [2Fe-2S]-[ferredoxin] + H2O = (2E)-4-hydroxy-3-methylbut-2-enyl diphosphate + 2 reduced [2Fe-2S]-[ferredoxin] + 2 H(+)</text>
        <dbReference type="Rhea" id="RHEA:24825"/>
        <dbReference type="Rhea" id="RHEA-COMP:10000"/>
        <dbReference type="Rhea" id="RHEA-COMP:10001"/>
        <dbReference type="ChEBI" id="CHEBI:15377"/>
        <dbReference type="ChEBI" id="CHEBI:15378"/>
        <dbReference type="ChEBI" id="CHEBI:33737"/>
        <dbReference type="ChEBI" id="CHEBI:33738"/>
        <dbReference type="ChEBI" id="CHEBI:57623"/>
        <dbReference type="ChEBI" id="CHEBI:128753"/>
        <dbReference type="EC" id="1.17.7.4"/>
    </reaction>
</comment>
<comment type="cofactor">
    <cofactor evidence="1">
        <name>[4Fe-4S] cluster</name>
        <dbReference type="ChEBI" id="CHEBI:49883"/>
    </cofactor>
    <text evidence="1">Binds 1 [4Fe-4S] cluster per subunit.</text>
</comment>
<comment type="pathway">
    <text evidence="1">Isoprenoid biosynthesis; dimethylallyl diphosphate biosynthesis; dimethylallyl diphosphate from (2E)-4-hydroxy-3-methylbutenyl diphosphate: step 1/1.</text>
</comment>
<comment type="pathway">
    <text evidence="1">Isoprenoid biosynthesis; isopentenyl diphosphate biosynthesis via DXP pathway; isopentenyl diphosphate from 1-deoxy-D-xylulose 5-phosphate: step 6/6.</text>
</comment>
<comment type="subunit">
    <text evidence="1">Homodimer.</text>
</comment>
<comment type="similarity">
    <text evidence="1">Belongs to the IspH family.</text>
</comment>
<proteinExistence type="inferred from homology"/>
<gene>
    <name evidence="1" type="primary">ispH</name>
    <name type="synonym">lytB</name>
    <name type="ordered locus">SF0026</name>
    <name type="ordered locus">S0028</name>
</gene>
<accession>Q7UDT8</accession>
<accession>Q83SR0</accession>
<reference key="1">
    <citation type="journal article" date="2002" name="Nucleic Acids Res.">
        <title>Genome sequence of Shigella flexneri 2a: insights into pathogenicity through comparison with genomes of Escherichia coli K12 and O157.</title>
        <authorList>
            <person name="Jin Q."/>
            <person name="Yuan Z."/>
            <person name="Xu J."/>
            <person name="Wang Y."/>
            <person name="Shen Y."/>
            <person name="Lu W."/>
            <person name="Wang J."/>
            <person name="Liu H."/>
            <person name="Yang J."/>
            <person name="Yang F."/>
            <person name="Zhang X."/>
            <person name="Zhang J."/>
            <person name="Yang G."/>
            <person name="Wu H."/>
            <person name="Qu D."/>
            <person name="Dong J."/>
            <person name="Sun L."/>
            <person name="Xue Y."/>
            <person name="Zhao A."/>
            <person name="Gao Y."/>
            <person name="Zhu J."/>
            <person name="Kan B."/>
            <person name="Ding K."/>
            <person name="Chen S."/>
            <person name="Cheng H."/>
            <person name="Yao Z."/>
            <person name="He B."/>
            <person name="Chen R."/>
            <person name="Ma D."/>
            <person name="Qiang B."/>
            <person name="Wen Y."/>
            <person name="Hou Y."/>
            <person name="Yu J."/>
        </authorList>
    </citation>
    <scope>NUCLEOTIDE SEQUENCE [LARGE SCALE GENOMIC DNA]</scope>
    <source>
        <strain>301 / Serotype 2a</strain>
    </source>
</reference>
<reference key="2">
    <citation type="journal article" date="2003" name="Infect. Immun.">
        <title>Complete genome sequence and comparative genomics of Shigella flexneri serotype 2a strain 2457T.</title>
        <authorList>
            <person name="Wei J."/>
            <person name="Goldberg M.B."/>
            <person name="Burland V."/>
            <person name="Venkatesan M.M."/>
            <person name="Deng W."/>
            <person name="Fournier G."/>
            <person name="Mayhew G.F."/>
            <person name="Plunkett G. III"/>
            <person name="Rose D.J."/>
            <person name="Darling A."/>
            <person name="Mau B."/>
            <person name="Perna N.T."/>
            <person name="Payne S.M."/>
            <person name="Runyen-Janecky L.J."/>
            <person name="Zhou S."/>
            <person name="Schwartz D.C."/>
            <person name="Blattner F.R."/>
        </authorList>
    </citation>
    <scope>NUCLEOTIDE SEQUENCE [LARGE SCALE GENOMIC DNA]</scope>
    <source>
        <strain>ATCC 700930 / 2457T / Serotype 2a</strain>
    </source>
</reference>
<name>ISPH_SHIFL</name>
<feature type="chain" id="PRO_0000128872" description="4-hydroxy-3-methylbut-2-enyl diphosphate reductase">
    <location>
        <begin position="1"/>
        <end position="316"/>
    </location>
</feature>
<feature type="active site" description="Proton donor" evidence="1">
    <location>
        <position position="126"/>
    </location>
</feature>
<feature type="binding site" evidence="1">
    <location>
        <position position="12"/>
    </location>
    <ligand>
        <name>[4Fe-4S] cluster</name>
        <dbReference type="ChEBI" id="CHEBI:49883"/>
    </ligand>
</feature>
<feature type="binding site" evidence="1">
    <location>
        <position position="41"/>
    </location>
    <ligand>
        <name>(2E)-4-hydroxy-3-methylbut-2-enyl diphosphate</name>
        <dbReference type="ChEBI" id="CHEBI:128753"/>
    </ligand>
</feature>
<feature type="binding site" evidence="1">
    <location>
        <position position="41"/>
    </location>
    <ligand>
        <name>dimethylallyl diphosphate</name>
        <dbReference type="ChEBI" id="CHEBI:57623"/>
    </ligand>
</feature>
<feature type="binding site" evidence="1">
    <location>
        <position position="41"/>
    </location>
    <ligand>
        <name>isopentenyl diphosphate</name>
        <dbReference type="ChEBI" id="CHEBI:128769"/>
    </ligand>
</feature>
<feature type="binding site" evidence="1">
    <location>
        <position position="74"/>
    </location>
    <ligand>
        <name>(2E)-4-hydroxy-3-methylbut-2-enyl diphosphate</name>
        <dbReference type="ChEBI" id="CHEBI:128753"/>
    </ligand>
</feature>
<feature type="binding site" evidence="1">
    <location>
        <position position="74"/>
    </location>
    <ligand>
        <name>dimethylallyl diphosphate</name>
        <dbReference type="ChEBI" id="CHEBI:57623"/>
    </ligand>
</feature>
<feature type="binding site" evidence="1">
    <location>
        <position position="74"/>
    </location>
    <ligand>
        <name>isopentenyl diphosphate</name>
        <dbReference type="ChEBI" id="CHEBI:128769"/>
    </ligand>
</feature>
<feature type="binding site" evidence="1">
    <location>
        <position position="96"/>
    </location>
    <ligand>
        <name>[4Fe-4S] cluster</name>
        <dbReference type="ChEBI" id="CHEBI:49883"/>
    </ligand>
</feature>
<feature type="binding site" evidence="1">
    <location>
        <position position="124"/>
    </location>
    <ligand>
        <name>(2E)-4-hydroxy-3-methylbut-2-enyl diphosphate</name>
        <dbReference type="ChEBI" id="CHEBI:128753"/>
    </ligand>
</feature>
<feature type="binding site" evidence="1">
    <location>
        <position position="124"/>
    </location>
    <ligand>
        <name>dimethylallyl diphosphate</name>
        <dbReference type="ChEBI" id="CHEBI:57623"/>
    </ligand>
</feature>
<feature type="binding site" evidence="1">
    <location>
        <position position="124"/>
    </location>
    <ligand>
        <name>isopentenyl diphosphate</name>
        <dbReference type="ChEBI" id="CHEBI:128769"/>
    </ligand>
</feature>
<feature type="binding site" evidence="1">
    <location>
        <position position="167"/>
    </location>
    <ligand>
        <name>(2E)-4-hydroxy-3-methylbut-2-enyl diphosphate</name>
        <dbReference type="ChEBI" id="CHEBI:128753"/>
    </ligand>
</feature>
<feature type="binding site" evidence="1">
    <location>
        <position position="197"/>
    </location>
    <ligand>
        <name>[4Fe-4S] cluster</name>
        <dbReference type="ChEBI" id="CHEBI:49883"/>
    </ligand>
</feature>
<feature type="binding site" evidence="1">
    <location>
        <position position="225"/>
    </location>
    <ligand>
        <name>(2E)-4-hydroxy-3-methylbut-2-enyl diphosphate</name>
        <dbReference type="ChEBI" id="CHEBI:128753"/>
    </ligand>
</feature>
<feature type="binding site" evidence="1">
    <location>
        <position position="225"/>
    </location>
    <ligand>
        <name>dimethylallyl diphosphate</name>
        <dbReference type="ChEBI" id="CHEBI:57623"/>
    </ligand>
</feature>
<feature type="binding site" evidence="1">
    <location>
        <position position="225"/>
    </location>
    <ligand>
        <name>isopentenyl diphosphate</name>
        <dbReference type="ChEBI" id="CHEBI:128769"/>
    </ligand>
</feature>
<feature type="binding site" evidence="1">
    <location>
        <position position="226"/>
    </location>
    <ligand>
        <name>(2E)-4-hydroxy-3-methylbut-2-enyl diphosphate</name>
        <dbReference type="ChEBI" id="CHEBI:128753"/>
    </ligand>
</feature>
<feature type="binding site" evidence="1">
    <location>
        <position position="226"/>
    </location>
    <ligand>
        <name>dimethylallyl diphosphate</name>
        <dbReference type="ChEBI" id="CHEBI:57623"/>
    </ligand>
</feature>
<feature type="binding site" evidence="1">
    <location>
        <position position="226"/>
    </location>
    <ligand>
        <name>isopentenyl diphosphate</name>
        <dbReference type="ChEBI" id="CHEBI:128769"/>
    </ligand>
</feature>
<feature type="binding site" evidence="1">
    <location>
        <position position="227"/>
    </location>
    <ligand>
        <name>(2E)-4-hydroxy-3-methylbut-2-enyl diphosphate</name>
        <dbReference type="ChEBI" id="CHEBI:128753"/>
    </ligand>
</feature>
<feature type="binding site" evidence="1">
    <location>
        <position position="227"/>
    </location>
    <ligand>
        <name>dimethylallyl diphosphate</name>
        <dbReference type="ChEBI" id="CHEBI:57623"/>
    </ligand>
</feature>
<feature type="binding site" evidence="1">
    <location>
        <position position="227"/>
    </location>
    <ligand>
        <name>isopentenyl diphosphate</name>
        <dbReference type="ChEBI" id="CHEBI:128769"/>
    </ligand>
</feature>
<feature type="binding site" evidence="1">
    <location>
        <position position="269"/>
    </location>
    <ligand>
        <name>(2E)-4-hydroxy-3-methylbut-2-enyl diphosphate</name>
        <dbReference type="ChEBI" id="CHEBI:128753"/>
    </ligand>
</feature>
<feature type="binding site" evidence="1">
    <location>
        <position position="269"/>
    </location>
    <ligand>
        <name>dimethylallyl diphosphate</name>
        <dbReference type="ChEBI" id="CHEBI:57623"/>
    </ligand>
</feature>
<feature type="binding site" evidence="1">
    <location>
        <position position="269"/>
    </location>
    <ligand>
        <name>isopentenyl diphosphate</name>
        <dbReference type="ChEBI" id="CHEBI:128769"/>
    </ligand>
</feature>
<evidence type="ECO:0000255" key="1">
    <source>
        <dbReference type="HAMAP-Rule" id="MF_00191"/>
    </source>
</evidence>
<protein>
    <recommendedName>
        <fullName evidence="1">4-hydroxy-3-methylbut-2-enyl diphosphate reductase</fullName>
        <shortName evidence="1">HMBPP reductase</shortName>
        <ecNumber evidence="1">1.17.7.4</ecNumber>
    </recommendedName>
</protein>